<dbReference type="EMBL" id="BC089052">
    <property type="protein sequence ID" value="AAH89052.1"/>
    <property type="molecule type" value="mRNA"/>
</dbReference>
<dbReference type="RefSeq" id="NP_446218.1">
    <property type="nucleotide sequence ID" value="NM_053766.2"/>
</dbReference>
<dbReference type="SMR" id="Q5HZF2"/>
<dbReference type="FunCoup" id="Q5HZF2">
    <property type="interactions" value="4174"/>
</dbReference>
<dbReference type="STRING" id="10116.ENSRNOP00000015605"/>
<dbReference type="GlyGen" id="Q5HZF2">
    <property type="glycosylation" value="1 site"/>
</dbReference>
<dbReference type="PhosphoSitePlus" id="Q5HZF2"/>
<dbReference type="PaxDb" id="10116-ENSRNOP00000015605"/>
<dbReference type="Ensembl" id="ENSRNOT00000111542.1">
    <property type="protein sequence ID" value="ENSRNOP00000076733.1"/>
    <property type="gene ID" value="ENSRNOG00000011678.7"/>
</dbReference>
<dbReference type="GeneID" id="114765"/>
<dbReference type="KEGG" id="rno:114765"/>
<dbReference type="UCSC" id="RGD:620033">
    <property type="organism name" value="rat"/>
</dbReference>
<dbReference type="AGR" id="RGD:620033"/>
<dbReference type="CTD" id="11193"/>
<dbReference type="RGD" id="620033">
    <property type="gene designation" value="Wbp4"/>
</dbReference>
<dbReference type="eggNOG" id="KOG0150">
    <property type="taxonomic scope" value="Eukaryota"/>
</dbReference>
<dbReference type="GeneTree" id="ENSGT00390000013956"/>
<dbReference type="HOGENOM" id="CLU_050927_1_0_1"/>
<dbReference type="InParanoid" id="Q5HZF2"/>
<dbReference type="PhylomeDB" id="Q5HZF2"/>
<dbReference type="TreeFam" id="TF316671"/>
<dbReference type="Reactome" id="R-RNO-72163">
    <property type="pathway name" value="mRNA Splicing - Major Pathway"/>
</dbReference>
<dbReference type="PRO" id="PR:Q5HZF2"/>
<dbReference type="Proteomes" id="UP000002494">
    <property type="component" value="Chromosome 15"/>
</dbReference>
<dbReference type="Bgee" id="ENSRNOG00000011678">
    <property type="expression patterns" value="Expressed in cerebellum and 20 other cell types or tissues"/>
</dbReference>
<dbReference type="ExpressionAtlas" id="Q5HZF2">
    <property type="expression patterns" value="baseline and differential"/>
</dbReference>
<dbReference type="GO" id="GO:0016607">
    <property type="term" value="C:nuclear speck"/>
    <property type="evidence" value="ECO:0000250"/>
    <property type="project" value="UniProtKB"/>
</dbReference>
<dbReference type="GO" id="GO:0005634">
    <property type="term" value="C:nucleus"/>
    <property type="evidence" value="ECO:0000250"/>
    <property type="project" value="UniProtKB"/>
</dbReference>
<dbReference type="GO" id="GO:0071011">
    <property type="term" value="C:precatalytic spliceosome"/>
    <property type="evidence" value="ECO:0000318"/>
    <property type="project" value="GO_Central"/>
</dbReference>
<dbReference type="GO" id="GO:0005681">
    <property type="term" value="C:spliceosomal complex"/>
    <property type="evidence" value="ECO:0000266"/>
    <property type="project" value="RGD"/>
</dbReference>
<dbReference type="GO" id="GO:0071005">
    <property type="term" value="C:U2-type precatalytic spliceosome"/>
    <property type="evidence" value="ECO:0000250"/>
    <property type="project" value="UniProtKB"/>
</dbReference>
<dbReference type="GO" id="GO:0070064">
    <property type="term" value="F:proline-rich region binding"/>
    <property type="evidence" value="ECO:0000266"/>
    <property type="project" value="RGD"/>
</dbReference>
<dbReference type="GO" id="GO:0003723">
    <property type="term" value="F:RNA binding"/>
    <property type="evidence" value="ECO:0000318"/>
    <property type="project" value="GO_Central"/>
</dbReference>
<dbReference type="GO" id="GO:0008270">
    <property type="term" value="F:zinc ion binding"/>
    <property type="evidence" value="ECO:0007669"/>
    <property type="project" value="UniProtKB-KW"/>
</dbReference>
<dbReference type="GO" id="GO:0045292">
    <property type="term" value="P:mRNA cis splicing, via spliceosome"/>
    <property type="evidence" value="ECO:0000250"/>
    <property type="project" value="UniProtKB"/>
</dbReference>
<dbReference type="GO" id="GO:0000398">
    <property type="term" value="P:mRNA splicing, via spliceosome"/>
    <property type="evidence" value="ECO:0000250"/>
    <property type="project" value="UniProtKB"/>
</dbReference>
<dbReference type="GO" id="GO:0008380">
    <property type="term" value="P:RNA splicing"/>
    <property type="evidence" value="ECO:0000318"/>
    <property type="project" value="GO_Central"/>
</dbReference>
<dbReference type="CDD" id="cd00201">
    <property type="entry name" value="WW"/>
    <property type="match status" value="2"/>
</dbReference>
<dbReference type="FunFam" id="3.30.160.60:FF:000767">
    <property type="entry name" value="WW domain-binding protein 4"/>
    <property type="match status" value="1"/>
</dbReference>
<dbReference type="Gene3D" id="2.20.70.10">
    <property type="match status" value="2"/>
</dbReference>
<dbReference type="Gene3D" id="3.30.160.60">
    <property type="entry name" value="Classic Zinc Finger"/>
    <property type="match status" value="1"/>
</dbReference>
<dbReference type="InterPro" id="IPR000690">
    <property type="entry name" value="Matrin/U1-C_Znf_C2H2"/>
</dbReference>
<dbReference type="InterPro" id="IPR003604">
    <property type="entry name" value="Matrin/U1-like-C_Znf_C2H2"/>
</dbReference>
<dbReference type="InterPro" id="IPR013085">
    <property type="entry name" value="U1-CZ_Znf_C2H2"/>
</dbReference>
<dbReference type="InterPro" id="IPR040023">
    <property type="entry name" value="WBP4"/>
</dbReference>
<dbReference type="InterPro" id="IPR001202">
    <property type="entry name" value="WW_dom"/>
</dbReference>
<dbReference type="InterPro" id="IPR036020">
    <property type="entry name" value="WW_dom_sf"/>
</dbReference>
<dbReference type="InterPro" id="IPR036236">
    <property type="entry name" value="Znf_C2H2_sf"/>
</dbReference>
<dbReference type="PANTHER" id="PTHR13173">
    <property type="entry name" value="WW DOMAIN BINDING PROTEIN 4"/>
    <property type="match status" value="1"/>
</dbReference>
<dbReference type="PANTHER" id="PTHR13173:SF10">
    <property type="entry name" value="WW DOMAIN-BINDING PROTEIN 4"/>
    <property type="match status" value="1"/>
</dbReference>
<dbReference type="Pfam" id="PF00397">
    <property type="entry name" value="WW"/>
    <property type="match status" value="2"/>
</dbReference>
<dbReference type="Pfam" id="PF06220">
    <property type="entry name" value="zf-U1"/>
    <property type="match status" value="1"/>
</dbReference>
<dbReference type="SMART" id="SM00456">
    <property type="entry name" value="WW"/>
    <property type="match status" value="2"/>
</dbReference>
<dbReference type="SMART" id="SM00451">
    <property type="entry name" value="ZnF_U1"/>
    <property type="match status" value="1"/>
</dbReference>
<dbReference type="SUPFAM" id="SSF57667">
    <property type="entry name" value="beta-beta-alpha zinc fingers"/>
    <property type="match status" value="1"/>
</dbReference>
<dbReference type="SUPFAM" id="SSF51045">
    <property type="entry name" value="WW domain"/>
    <property type="match status" value="2"/>
</dbReference>
<dbReference type="PROSITE" id="PS01159">
    <property type="entry name" value="WW_DOMAIN_1"/>
    <property type="match status" value="1"/>
</dbReference>
<dbReference type="PROSITE" id="PS50020">
    <property type="entry name" value="WW_DOMAIN_2"/>
    <property type="match status" value="2"/>
</dbReference>
<dbReference type="PROSITE" id="PS50171">
    <property type="entry name" value="ZF_MATRIN"/>
    <property type="match status" value="1"/>
</dbReference>
<accession>Q5HZF2</accession>
<organism>
    <name type="scientific">Rattus norvegicus</name>
    <name type="common">Rat</name>
    <dbReference type="NCBI Taxonomy" id="10116"/>
    <lineage>
        <taxon>Eukaryota</taxon>
        <taxon>Metazoa</taxon>
        <taxon>Chordata</taxon>
        <taxon>Craniata</taxon>
        <taxon>Vertebrata</taxon>
        <taxon>Euteleostomi</taxon>
        <taxon>Mammalia</taxon>
        <taxon>Eutheria</taxon>
        <taxon>Euarchontoglires</taxon>
        <taxon>Glires</taxon>
        <taxon>Rodentia</taxon>
        <taxon>Myomorpha</taxon>
        <taxon>Muroidea</taxon>
        <taxon>Muridae</taxon>
        <taxon>Murinae</taxon>
        <taxon>Rattus</taxon>
    </lineage>
</organism>
<keyword id="KW-0479">Metal-binding</keyword>
<keyword id="KW-0507">mRNA processing</keyword>
<keyword id="KW-0508">mRNA splicing</keyword>
<keyword id="KW-0539">Nucleus</keyword>
<keyword id="KW-0597">Phosphoprotein</keyword>
<keyword id="KW-1185">Reference proteome</keyword>
<keyword id="KW-0677">Repeat</keyword>
<keyword id="KW-0747">Spliceosome</keyword>
<keyword id="KW-0862">Zinc</keyword>
<keyword id="KW-0863">Zinc-finger</keyword>
<proteinExistence type="evidence at transcript level"/>
<evidence type="ECO:0000250" key="1"/>
<evidence type="ECO:0000250" key="2">
    <source>
        <dbReference type="UniProtKB" id="O75554"/>
    </source>
</evidence>
<evidence type="ECO:0000250" key="3">
    <source>
        <dbReference type="UniProtKB" id="Q61048"/>
    </source>
</evidence>
<evidence type="ECO:0000255" key="4">
    <source>
        <dbReference type="PROSITE-ProRule" id="PRU00130"/>
    </source>
</evidence>
<evidence type="ECO:0000255" key="5">
    <source>
        <dbReference type="PROSITE-ProRule" id="PRU00224"/>
    </source>
</evidence>
<evidence type="ECO:0000256" key="6">
    <source>
        <dbReference type="SAM" id="MobiDB-lite"/>
    </source>
</evidence>
<sequence length="374" mass="42157">MADYWKSQPKKFCDYCKCWIADNRPSVEFHERGKNHKENVARKISEIKQKSLDKAKEEEKASKEFAAMEAAALKAYQEDLKRLGLQSDISEPTISPVTNTVQPTPTANQQKEKKKKKKKKEASKGRWVEGVTADGHCYYYDLVTGASQWEKPEGFQGNLKKTAAKAIWVEGLSEDGYTYYYNTETGESKWEKPDDFIPHGGDVLSSKDSEKLPDTLEDSKSSDSHSDSDDEQKKAGEASAETKKLIIKFKEKNKSTEKRIGPEIQKEKTTPKQNPSNTNEEKPKTPKKSTNPYGEWQEIKQEAESQEEVDLELPSTENECLSSSEAGAGEIKVVFKEKTVSSLGVAADGVAPVFKKRRIENGKSRNLRQRGEDE</sequence>
<gene>
    <name type="primary">Wbp4</name>
</gene>
<reference key="1">
    <citation type="journal article" date="2004" name="Genome Res.">
        <title>The status, quality, and expansion of the NIH full-length cDNA project: the Mammalian Gene Collection (MGC).</title>
        <authorList>
            <consortium name="The MGC Project Team"/>
        </authorList>
    </citation>
    <scope>NUCLEOTIDE SEQUENCE [LARGE SCALE MRNA]</scope>
    <source>
        <tissue>Ovary</tissue>
    </source>
</reference>
<feature type="chain" id="PRO_0000076067" description="WW domain-binding protein 4">
    <location>
        <begin position="1"/>
        <end position="374"/>
    </location>
</feature>
<feature type="domain" description="WW 1" evidence="5">
    <location>
        <begin position="121"/>
        <end position="154"/>
    </location>
</feature>
<feature type="domain" description="WW 2" evidence="5">
    <location>
        <begin position="162"/>
        <end position="195"/>
    </location>
</feature>
<feature type="zinc finger region" description="Matrin-type" evidence="4">
    <location>
        <begin position="11"/>
        <end position="42"/>
    </location>
</feature>
<feature type="region of interest" description="Disordered" evidence="6">
    <location>
        <begin position="91"/>
        <end position="126"/>
    </location>
</feature>
<feature type="region of interest" description="Disordered" evidence="6">
    <location>
        <begin position="188"/>
        <end position="328"/>
    </location>
</feature>
<feature type="region of interest" description="Interaction with SNRNP200" evidence="2">
    <location>
        <begin position="355"/>
        <end position="373"/>
    </location>
</feature>
<feature type="compositionally biased region" description="Polar residues" evidence="6">
    <location>
        <begin position="91"/>
        <end position="109"/>
    </location>
</feature>
<feature type="compositionally biased region" description="Basic residues" evidence="6">
    <location>
        <begin position="112"/>
        <end position="121"/>
    </location>
</feature>
<feature type="compositionally biased region" description="Basic and acidic residues" evidence="6">
    <location>
        <begin position="188"/>
        <end position="197"/>
    </location>
</feature>
<feature type="compositionally biased region" description="Basic and acidic residues" evidence="6">
    <location>
        <begin position="205"/>
        <end position="270"/>
    </location>
</feature>
<feature type="compositionally biased region" description="Polar residues" evidence="6">
    <location>
        <begin position="315"/>
        <end position="325"/>
    </location>
</feature>
<feature type="modified residue" description="Phosphoserine" evidence="2">
    <location>
        <position position="219"/>
    </location>
</feature>
<feature type="modified residue" description="Phosphoserine" evidence="2">
    <location>
        <position position="226"/>
    </location>
</feature>
<feature type="modified residue" description="Phosphoserine" evidence="2">
    <location>
        <position position="228"/>
    </location>
</feature>
<comment type="function">
    <text evidence="2">Involved in pre-mRNA splicing as a component of the spliceosome. May play a role in cross-intron bridging of U1 and U2 snRNPs in the mammalian A complex.</text>
</comment>
<comment type="subunit">
    <text evidence="2 3">Component of the spliceosome B complex. Associated with U2 snRNPs. Binds splicing factors SNRPB, SNRPC and SF1 (By similarity). Interacts via the WW domains with the Pro-rich domains of KHDRBS1/SAM68 (By similarity). Interacts via the WW domains with the Pro-rich domains of WBP11 (By similarity). Interacts with SNRNP200 (By similarity).</text>
</comment>
<comment type="subcellular location">
    <subcellularLocation>
        <location evidence="2">Nucleus</location>
    </subcellularLocation>
    <subcellularLocation>
        <location evidence="4">Nucleus speckle</location>
    </subcellularLocation>
</comment>
<comment type="domain">
    <text evidence="1">The WW domain recognizes the proline, glycine and methionine-rich (PGM) motif present in the splicing factors, as well as the Arg/Gly-rich-flanked Pro-rich domains found in several WW domain-binding proteins.</text>
</comment>
<name>WBP4_RAT</name>
<protein>
    <recommendedName>
        <fullName>WW domain-binding protein 4</fullName>
        <shortName>WBP-4</shortName>
    </recommendedName>
    <alternativeName>
        <fullName>Formin-binding protein 21</fullName>
    </alternativeName>
    <alternativeName>
        <fullName>WW domain-containing-binding protein 4</fullName>
    </alternativeName>
</protein>